<proteinExistence type="evidence at transcript level"/>
<accession>A0A140JWM8</accession>
<accession>Q9LVY3</accession>
<accession>Q9LVY4</accession>
<name>C7162_ARATH</name>
<gene>
    <name evidence="4" type="primary">CYP716A2</name>
    <name evidence="6 7" type="ordered locus">At5g36130/At5g36140</name>
    <name evidence="8 9" type="ORF">MAB16.8/MAB16.9</name>
</gene>
<sequence>MYLTIIFLFISSIIFPLLFFLGKHLSNFRYPNLPPGKIGFPLIGETLSFLSAGRQGHPEKFVTDRVRHFSSGIFKTHLFGSPFAVVTGASGNKFLFTNENKLVISWWPDSVNKIFPSSTQTSSKEEAIKTRMLLMPSMKPEALRRYVGVMDEIAQKHFETEWANQDQLIVFPLTKKFTFSIACRLFLSMDDLERVRKLEEPFTTVMTGVFSIPIDLPGTRFNRAIKASRLLSKEVSTIIRQRKEELKAGKVSVEQDILSHMLMNIGETKDEDLADKIIALLIGGHDTTSIVCTFVVNYLAEFPHIYQRVLEEQKEILNNKDVNEKLTWEDIEKMRYSWNVACEVMRIVPPLAGTFREAIDHFSFKGFYIPKGWKLYWSATATHKNPEYFPEPEKFEPSRFEGSGPKPYTYVPFGGGSRICPGREYARLEILIFMHNLVKRFKWEKVFPKENKLVADPAPIPAKGLPIRIFPQS</sequence>
<evidence type="ECO:0000250" key="1">
    <source>
        <dbReference type="UniProtKB" id="P04798"/>
    </source>
</evidence>
<evidence type="ECO:0000255" key="2"/>
<evidence type="ECO:0000269" key="3">
    <source>
    </source>
</evidence>
<evidence type="ECO:0000303" key="4">
    <source>
    </source>
</evidence>
<evidence type="ECO:0000305" key="5"/>
<evidence type="ECO:0000312" key="6">
    <source>
        <dbReference type="Araport" id="AT5G36130"/>
    </source>
</evidence>
<evidence type="ECO:0000312" key="7">
    <source>
        <dbReference type="Araport" id="AT5G36140"/>
    </source>
</evidence>
<evidence type="ECO:0000312" key="8">
    <source>
        <dbReference type="EMBL" id="BAA96888.1"/>
    </source>
</evidence>
<evidence type="ECO:0000312" key="9">
    <source>
        <dbReference type="EMBL" id="BAA96889.1"/>
    </source>
</evidence>
<comment type="function">
    <text evidence="3">Possesses triterpene oxidizing activity. Catalyzes the C28 hydroxylation of alpha-amyrin, beta-amyrin, and lupeol, producing uvaol, erythrodiol, and betulin, respectively. Catalyzes the C28 carboxylation of alpha- and beta-amyrin. Possesses 22alpha-hydroxylation activity against alpha- and beta-amaryn.</text>
</comment>
<comment type="cofactor">
    <cofactor evidence="1">
        <name>heme</name>
        <dbReference type="ChEBI" id="CHEBI:30413"/>
    </cofactor>
</comment>
<comment type="subcellular location">
    <subcellularLocation>
        <location evidence="2">Membrane</location>
        <topology evidence="2">Single-pass membrane protein</topology>
    </subcellularLocation>
</comment>
<comment type="similarity">
    <text evidence="5">Belongs to the cytochrome P450 family.</text>
</comment>
<comment type="sequence caution" evidence="5">
    <conflict type="erroneous gene model prediction">
        <sequence resource="EMBL-CDS" id="AED94047"/>
    </conflict>
    <text>Was originally thought to correspond to two different genes At5g36130 and At5g36140.</text>
</comment>
<comment type="sequence caution" evidence="5">
    <conflict type="erroneous gene model prediction">
        <sequence resource="EMBL-CDS" id="AED94048"/>
    </conflict>
    <text>Was originally thought to correspond to two different genes At5g36130 and At5g36140.</text>
</comment>
<comment type="sequence caution" evidence="5">
    <conflict type="erroneous gene model prediction">
        <sequence resource="EMBL-CDS" id="BAA96888"/>
    </conflict>
    <text>Was originally thought to correspond to two different genes At5g36130 and At5g36140.</text>
</comment>
<comment type="sequence caution" evidence="5">
    <conflict type="erroneous gene model prediction">
        <sequence resource="EMBL-CDS" id="BAA96889"/>
    </conflict>
    <text>Was originally thought to correspond to two different genes At5g36130 and At5g36140.</text>
</comment>
<organism>
    <name type="scientific">Arabidopsis thaliana</name>
    <name type="common">Mouse-ear cress</name>
    <dbReference type="NCBI Taxonomy" id="3702"/>
    <lineage>
        <taxon>Eukaryota</taxon>
        <taxon>Viridiplantae</taxon>
        <taxon>Streptophyta</taxon>
        <taxon>Embryophyta</taxon>
        <taxon>Tracheophyta</taxon>
        <taxon>Spermatophyta</taxon>
        <taxon>Magnoliopsida</taxon>
        <taxon>eudicotyledons</taxon>
        <taxon>Gunneridae</taxon>
        <taxon>Pentapetalae</taxon>
        <taxon>rosids</taxon>
        <taxon>malvids</taxon>
        <taxon>Brassicales</taxon>
        <taxon>Brassicaceae</taxon>
        <taxon>Camelineae</taxon>
        <taxon>Arabidopsis</taxon>
    </lineage>
</organism>
<dbReference type="EC" id="1.14.-.-" evidence="5"/>
<dbReference type="EMBL" id="LC106013">
    <property type="protein sequence ID" value="BAU61505.1"/>
    <property type="molecule type" value="mRNA"/>
</dbReference>
<dbReference type="EMBL" id="AB018112">
    <property type="protein sequence ID" value="BAA96888.1"/>
    <property type="status" value="ALT_SEQ"/>
    <property type="molecule type" value="Genomic_DNA"/>
</dbReference>
<dbReference type="EMBL" id="AB018112">
    <property type="protein sequence ID" value="BAA96889.1"/>
    <property type="status" value="ALT_SEQ"/>
    <property type="molecule type" value="Genomic_DNA"/>
</dbReference>
<dbReference type="EMBL" id="CP002688">
    <property type="protein sequence ID" value="AED94047.1"/>
    <property type="status" value="ALT_SEQ"/>
    <property type="molecule type" value="Genomic_DNA"/>
</dbReference>
<dbReference type="EMBL" id="CP002688">
    <property type="protein sequence ID" value="AED94048.1"/>
    <property type="status" value="ALT_SEQ"/>
    <property type="molecule type" value="Genomic_DNA"/>
</dbReference>
<dbReference type="RefSeq" id="NP_198462.1">
    <property type="nucleotide sequence ID" value="NM_123004.2"/>
</dbReference>
<dbReference type="RefSeq" id="NP_198463.1">
    <property type="nucleotide sequence ID" value="NM_123005.2"/>
</dbReference>
<dbReference type="SMR" id="A0A140JWM8"/>
<dbReference type="FunCoup" id="A0A140JWM8">
    <property type="interactions" value="164"/>
</dbReference>
<dbReference type="STRING" id="3702.A0A140JWM8"/>
<dbReference type="PaxDb" id="3702-AT5G36140.1"/>
<dbReference type="PeptideAtlas" id="A0A140JWM8"/>
<dbReference type="ProteomicsDB" id="240305"/>
<dbReference type="GeneID" id="833611"/>
<dbReference type="KEGG" id="ath:AT5G36130"/>
<dbReference type="KEGG" id="ath:AT5G36140"/>
<dbReference type="Araport" id="AT5G36130"/>
<dbReference type="Araport" id="AT5G36140"/>
<dbReference type="TAIR" id="AT5G36130"/>
<dbReference type="eggNOG" id="KOG0157">
    <property type="taxonomic scope" value="Eukaryota"/>
</dbReference>
<dbReference type="HOGENOM" id="CLU_001570_15_4_1"/>
<dbReference type="InParanoid" id="A0A140JWM8"/>
<dbReference type="PRO" id="PR:A0A140JWM8"/>
<dbReference type="Proteomes" id="UP000006548">
    <property type="component" value="Chromosome 5"/>
</dbReference>
<dbReference type="ExpressionAtlas" id="A0A140JWM8">
    <property type="expression patterns" value="baseline and differential"/>
</dbReference>
<dbReference type="GO" id="GO:0016020">
    <property type="term" value="C:membrane"/>
    <property type="evidence" value="ECO:0007669"/>
    <property type="project" value="UniProtKB-SubCell"/>
</dbReference>
<dbReference type="GO" id="GO:0020037">
    <property type="term" value="F:heme binding"/>
    <property type="evidence" value="ECO:0007669"/>
    <property type="project" value="InterPro"/>
</dbReference>
<dbReference type="GO" id="GO:0005506">
    <property type="term" value="F:iron ion binding"/>
    <property type="evidence" value="ECO:0007669"/>
    <property type="project" value="InterPro"/>
</dbReference>
<dbReference type="GO" id="GO:0004497">
    <property type="term" value="F:monooxygenase activity"/>
    <property type="evidence" value="ECO:0000318"/>
    <property type="project" value="GO_Central"/>
</dbReference>
<dbReference type="GO" id="GO:0016709">
    <property type="term" value="F:oxidoreductase activity, acting on paired donors, with incorporation or reduction of molecular oxygen, NAD(P)H as one donor, and incorporation of one atom of oxygen"/>
    <property type="evidence" value="ECO:0000314"/>
    <property type="project" value="UniProtKB"/>
</dbReference>
<dbReference type="GO" id="GO:0016135">
    <property type="term" value="P:saponin biosynthetic process"/>
    <property type="evidence" value="ECO:0000318"/>
    <property type="project" value="GO_Central"/>
</dbReference>
<dbReference type="GO" id="GO:0006722">
    <property type="term" value="P:triterpenoid metabolic process"/>
    <property type="evidence" value="ECO:0000314"/>
    <property type="project" value="UniProtKB"/>
</dbReference>
<dbReference type="CDD" id="cd11043">
    <property type="entry name" value="CYP90-like"/>
    <property type="match status" value="1"/>
</dbReference>
<dbReference type="FunFam" id="1.10.630.10:FF:000022">
    <property type="entry name" value="Taxadiene 5-alpha hydroxylase"/>
    <property type="match status" value="1"/>
</dbReference>
<dbReference type="Gene3D" id="1.10.630.10">
    <property type="entry name" value="Cytochrome P450"/>
    <property type="match status" value="1"/>
</dbReference>
<dbReference type="InterPro" id="IPR001128">
    <property type="entry name" value="Cyt_P450"/>
</dbReference>
<dbReference type="InterPro" id="IPR017972">
    <property type="entry name" value="Cyt_P450_CS"/>
</dbReference>
<dbReference type="InterPro" id="IPR002401">
    <property type="entry name" value="Cyt_P450_E_grp-I"/>
</dbReference>
<dbReference type="InterPro" id="IPR036396">
    <property type="entry name" value="Cyt_P450_sf"/>
</dbReference>
<dbReference type="PANTHER" id="PTHR24286">
    <property type="entry name" value="CYTOCHROME P450 26"/>
    <property type="match status" value="1"/>
</dbReference>
<dbReference type="PANTHER" id="PTHR24286:SF349">
    <property type="entry name" value="CYTOCHROME P450 716A1-RELATED"/>
    <property type="match status" value="1"/>
</dbReference>
<dbReference type="Pfam" id="PF00067">
    <property type="entry name" value="p450"/>
    <property type="match status" value="1"/>
</dbReference>
<dbReference type="PRINTS" id="PR00463">
    <property type="entry name" value="EP450I"/>
</dbReference>
<dbReference type="PRINTS" id="PR00385">
    <property type="entry name" value="P450"/>
</dbReference>
<dbReference type="SUPFAM" id="SSF48264">
    <property type="entry name" value="Cytochrome P450"/>
    <property type="match status" value="1"/>
</dbReference>
<dbReference type="PROSITE" id="PS00086">
    <property type="entry name" value="CYTOCHROME_P450"/>
    <property type="match status" value="1"/>
</dbReference>
<protein>
    <recommendedName>
        <fullName evidence="4">Cytochrome P450 716A2</fullName>
        <ecNumber evidence="5">1.14.-.-</ecNumber>
    </recommendedName>
</protein>
<keyword id="KW-0349">Heme</keyword>
<keyword id="KW-0408">Iron</keyword>
<keyword id="KW-0472">Membrane</keyword>
<keyword id="KW-0479">Metal-binding</keyword>
<keyword id="KW-0503">Monooxygenase</keyword>
<keyword id="KW-0560">Oxidoreductase</keyword>
<keyword id="KW-1185">Reference proteome</keyword>
<keyword id="KW-0812">Transmembrane</keyword>
<keyword id="KW-1133">Transmembrane helix</keyword>
<feature type="chain" id="PRO_0000444437" description="Cytochrome P450 716A2">
    <location>
        <begin position="1"/>
        <end position="473"/>
    </location>
</feature>
<feature type="transmembrane region" description="Helical" evidence="2">
    <location>
        <begin position="1"/>
        <end position="21"/>
    </location>
</feature>
<feature type="binding site" description="axial binding residue" evidence="1">
    <location>
        <position position="420"/>
    </location>
    <ligand>
        <name>heme</name>
        <dbReference type="ChEBI" id="CHEBI:30413"/>
    </ligand>
    <ligandPart>
        <name>Fe</name>
        <dbReference type="ChEBI" id="CHEBI:18248"/>
    </ligandPart>
</feature>
<reference key="1">
    <citation type="journal article" date="2016" name="FEBS Lett.">
        <title>Novel triterpene oxidizing activity of Arabidopsis thaliana CYP716A subfamily enzymes.</title>
        <authorList>
            <person name="Yasumoto S."/>
            <person name="Fukushima E.O."/>
            <person name="Seki H."/>
            <person name="Muranaka T."/>
        </authorList>
    </citation>
    <scope>NUCLEOTIDE SEQUENCE [MRNA]</scope>
    <scope>FUNCTION</scope>
    <source>
        <strain>cv. Columbia</strain>
    </source>
</reference>
<reference key="2">
    <citation type="journal article" date="2000" name="DNA Res.">
        <title>Structural analysis of Arabidopsis thaliana chromosome 5. X. Sequence features of the regions of 3,076,755 bp covered by sixty P1 and TAC clones.</title>
        <authorList>
            <person name="Sato S."/>
            <person name="Nakamura Y."/>
            <person name="Kaneko T."/>
            <person name="Katoh T."/>
            <person name="Asamizu E."/>
            <person name="Kotani H."/>
            <person name="Tabata S."/>
        </authorList>
    </citation>
    <scope>NUCLEOTIDE SEQUENCE [LARGE SCALE GENOMIC DNA]</scope>
    <source>
        <strain>cv. Columbia</strain>
    </source>
</reference>
<reference key="3">
    <citation type="journal article" date="2017" name="Plant J.">
        <title>Araport11: a complete reannotation of the Arabidopsis thaliana reference genome.</title>
        <authorList>
            <person name="Cheng C.Y."/>
            <person name="Krishnakumar V."/>
            <person name="Chan A.P."/>
            <person name="Thibaud-Nissen F."/>
            <person name="Schobel S."/>
            <person name="Town C.D."/>
        </authorList>
    </citation>
    <scope>GENOME REANNOTATION</scope>
    <source>
        <strain>cv. Columbia</strain>
    </source>
</reference>